<name>Y1517_METJA</name>
<proteinExistence type="predicted"/>
<keyword id="KW-1185">Reference proteome</keyword>
<accession>Q58912</accession>
<sequence>MVKLMNLWSERIKDREVVEVIGCERVPLNETLNEIVVLFDEYTKRGDYKVEIFDDVFNYYHNRILTNDEFIDGVARIKLGLDTRNHAKEWLLEVVNWFAGNRYNLRDEEIKLGNRLRDWMNIGVSLVIPKELKPKFDEFYKMAKKFDWQVEIRNEMIFKTTLNGKEVYTFILMGDVVNERLDNILDGGGVFDLGKRVVCDDEWFSGWLVRDIDVNKNIMEVLGMLSLKSQEILDISVESALIRRKNIKTKSMVVKLVKVKNLIQLLKRKKKSGLNCLV</sequence>
<gene>
    <name type="ordered locus">MJ1517</name>
</gene>
<organism>
    <name type="scientific">Methanocaldococcus jannaschii (strain ATCC 43067 / DSM 2661 / JAL-1 / JCM 10045 / NBRC 100440)</name>
    <name type="common">Methanococcus jannaschii</name>
    <dbReference type="NCBI Taxonomy" id="243232"/>
    <lineage>
        <taxon>Archaea</taxon>
        <taxon>Methanobacteriati</taxon>
        <taxon>Methanobacteriota</taxon>
        <taxon>Methanomada group</taxon>
        <taxon>Methanococci</taxon>
        <taxon>Methanococcales</taxon>
        <taxon>Methanocaldococcaceae</taxon>
        <taxon>Methanocaldococcus</taxon>
    </lineage>
</organism>
<dbReference type="EMBL" id="L77117">
    <property type="protein sequence ID" value="AAB99548.1"/>
    <property type="molecule type" value="Genomic_DNA"/>
</dbReference>
<dbReference type="PIR" id="D64489">
    <property type="entry name" value="D64489"/>
</dbReference>
<dbReference type="STRING" id="243232.MJ_1517"/>
<dbReference type="PaxDb" id="243232-MJ_1517"/>
<dbReference type="EnsemblBacteria" id="AAB99548">
    <property type="protein sequence ID" value="AAB99548"/>
    <property type="gene ID" value="MJ_1517"/>
</dbReference>
<dbReference type="KEGG" id="mja:MJ_1517"/>
<dbReference type="eggNOG" id="arCOG14686">
    <property type="taxonomic scope" value="Archaea"/>
</dbReference>
<dbReference type="HOGENOM" id="CLU_999698_0_0_2"/>
<dbReference type="InParanoid" id="Q58912"/>
<dbReference type="Proteomes" id="UP000000805">
    <property type="component" value="Chromosome"/>
</dbReference>
<reference key="1">
    <citation type="journal article" date="1996" name="Science">
        <title>Complete genome sequence of the methanogenic archaeon, Methanococcus jannaschii.</title>
        <authorList>
            <person name="Bult C.J."/>
            <person name="White O."/>
            <person name="Olsen G.J."/>
            <person name="Zhou L."/>
            <person name="Fleischmann R.D."/>
            <person name="Sutton G.G."/>
            <person name="Blake J.A."/>
            <person name="FitzGerald L.M."/>
            <person name="Clayton R.A."/>
            <person name="Gocayne J.D."/>
            <person name="Kerlavage A.R."/>
            <person name="Dougherty B.A."/>
            <person name="Tomb J.-F."/>
            <person name="Adams M.D."/>
            <person name="Reich C.I."/>
            <person name="Overbeek R."/>
            <person name="Kirkness E.F."/>
            <person name="Weinstock K.G."/>
            <person name="Merrick J.M."/>
            <person name="Glodek A."/>
            <person name="Scott J.L."/>
            <person name="Geoghagen N.S.M."/>
            <person name="Weidman J.F."/>
            <person name="Fuhrmann J.L."/>
            <person name="Nguyen D."/>
            <person name="Utterback T.R."/>
            <person name="Kelley J.M."/>
            <person name="Peterson J.D."/>
            <person name="Sadow P.W."/>
            <person name="Hanna M.C."/>
            <person name="Cotton M.D."/>
            <person name="Roberts K.M."/>
            <person name="Hurst M.A."/>
            <person name="Kaine B.P."/>
            <person name="Borodovsky M."/>
            <person name="Klenk H.-P."/>
            <person name="Fraser C.M."/>
            <person name="Smith H.O."/>
            <person name="Woese C.R."/>
            <person name="Venter J.C."/>
        </authorList>
    </citation>
    <scope>NUCLEOTIDE SEQUENCE [LARGE SCALE GENOMIC DNA]</scope>
    <source>
        <strain>ATCC 43067 / DSM 2661 / JAL-1 / JCM 10045 / NBRC 100440</strain>
    </source>
</reference>
<feature type="chain" id="PRO_0000107389" description="Uncharacterized protein MJ1517">
    <location>
        <begin position="1"/>
        <end position="278"/>
    </location>
</feature>
<protein>
    <recommendedName>
        <fullName>Uncharacterized protein MJ1517</fullName>
    </recommendedName>
</protein>